<gene>
    <name evidence="6" type="primary">Krtap5-4</name>
</gene>
<feature type="chain" id="PRO_0000361660" description="Keratin-associated protein 5-4">
    <location>
        <begin position="1"/>
        <end position="223"/>
    </location>
</feature>
<feature type="repeat" description="1" evidence="2">
    <location>
        <begin position="21"/>
        <end position="24"/>
    </location>
</feature>
<feature type="repeat" description="2" evidence="2">
    <location>
        <begin position="27"/>
        <end position="30"/>
    </location>
</feature>
<feature type="repeat" description="3" evidence="2">
    <location>
        <begin position="79"/>
        <end position="82"/>
    </location>
</feature>
<feature type="repeat" description="4" evidence="2">
    <location>
        <begin position="89"/>
        <end position="92"/>
    </location>
</feature>
<feature type="repeat" description="5" evidence="2">
    <location>
        <begin position="107"/>
        <end position="110"/>
    </location>
</feature>
<feature type="repeat" description="6" evidence="2">
    <location>
        <begin position="117"/>
        <end position="120"/>
    </location>
</feature>
<feature type="repeat" description="7" evidence="2">
    <location>
        <begin position="135"/>
        <end position="138"/>
    </location>
</feature>
<feature type="repeat" description="8" evidence="2">
    <location>
        <begin position="145"/>
        <end position="148"/>
    </location>
</feature>
<feature type="repeat" description="9" evidence="2">
    <location>
        <begin position="155"/>
        <end position="158"/>
    </location>
</feature>
<feature type="repeat" description="10" evidence="2">
    <location>
        <begin position="173"/>
        <end position="176"/>
    </location>
</feature>
<feature type="repeat" description="11" evidence="2">
    <location>
        <begin position="183"/>
        <end position="186"/>
    </location>
</feature>
<feature type="repeat" description="12" evidence="2">
    <location>
        <begin position="193"/>
        <end position="196"/>
    </location>
</feature>
<feature type="repeat" description="13" evidence="2">
    <location>
        <begin position="203"/>
        <end position="206"/>
    </location>
</feature>
<feature type="repeat" description="14" evidence="2">
    <location>
        <begin position="213"/>
        <end position="216"/>
    </location>
</feature>
<feature type="region of interest" description="14 X 4 AA repeats of C-C-X-P" evidence="2">
    <location>
        <begin position="21"/>
        <end position="216"/>
    </location>
</feature>
<keyword id="KW-0416">Keratin</keyword>
<keyword id="KW-1185">Reference proteome</keyword>
<keyword id="KW-0677">Repeat</keyword>
<protein>
    <recommendedName>
        <fullName evidence="1">Keratin-associated protein 5-4</fullName>
    </recommendedName>
    <alternativeName>
        <fullName>Ultra high sulfur serine protein 2</fullName>
        <shortName>UHS-Ser-2</shortName>
    </alternativeName>
</protein>
<sequence>MTCCGCSGGCGSSCGGCGSSCCKPVCCCVPVCSCSSCGGCKGGCGSCGGCKGGCGSCGGCKGGCGSCGGCKGGCCQSSCCKPCCCQSSCCKPCCSSGCGSSCCQSSCCKPCCCQSSCCKPCCSSGCGSSCCQSSCCKPCCCQSSCCKPCCCQSSCCKPCCSSGCGSSCCQSSCCKPCCCQSSCCKPCCCQSSCCKPCCCQSSCCKPCCCQSSCCAPVCCQCKI</sequence>
<organism>
    <name type="scientific">Mus musculus</name>
    <name type="common">Mouse</name>
    <dbReference type="NCBI Taxonomy" id="10090"/>
    <lineage>
        <taxon>Eukaryota</taxon>
        <taxon>Metazoa</taxon>
        <taxon>Chordata</taxon>
        <taxon>Craniata</taxon>
        <taxon>Vertebrata</taxon>
        <taxon>Euteleostomi</taxon>
        <taxon>Mammalia</taxon>
        <taxon>Eutheria</taxon>
        <taxon>Euarchontoglires</taxon>
        <taxon>Glires</taxon>
        <taxon>Rodentia</taxon>
        <taxon>Myomorpha</taxon>
        <taxon>Muroidea</taxon>
        <taxon>Muridae</taxon>
        <taxon>Murinae</taxon>
        <taxon>Mus</taxon>
        <taxon>Mus</taxon>
    </lineage>
</organism>
<dbReference type="EMBL" id="M37760">
    <property type="protein sequence ID" value="AAA40107.1"/>
    <property type="molecule type" value="Genomic_DNA"/>
</dbReference>
<dbReference type="CCDS" id="CCDS22027.1"/>
<dbReference type="PIR" id="A38660">
    <property type="entry name" value="B38346"/>
</dbReference>
<dbReference type="RefSeq" id="NP_056624.1">
    <property type="nucleotide sequence ID" value="NM_015809.2"/>
</dbReference>
<dbReference type="STRING" id="10090.ENSMUSP00000059461"/>
<dbReference type="PaxDb" id="10090-ENSMUSP00000059461"/>
<dbReference type="DNASU" id="50775"/>
<dbReference type="Ensembl" id="ENSMUST00000061403.6">
    <property type="protein sequence ID" value="ENSMUSP00000059461.5"/>
    <property type="gene ID" value="ENSMUSG00000045236.6"/>
</dbReference>
<dbReference type="GeneID" id="50775"/>
<dbReference type="KEGG" id="mmu:50775"/>
<dbReference type="UCSC" id="uc009kms.1">
    <property type="organism name" value="mouse"/>
</dbReference>
<dbReference type="AGR" id="MGI:1354758"/>
<dbReference type="CTD" id="387267"/>
<dbReference type="MGI" id="MGI:1354758">
    <property type="gene designation" value="Krtap5-4"/>
</dbReference>
<dbReference type="VEuPathDB" id="HostDB:ENSMUSG00000045236"/>
<dbReference type="eggNOG" id="KOG4726">
    <property type="taxonomic scope" value="Eukaryota"/>
</dbReference>
<dbReference type="GeneTree" id="ENSGT00940000164129"/>
<dbReference type="HOGENOM" id="CLU_097966_0_0_1"/>
<dbReference type="InParanoid" id="Q62220"/>
<dbReference type="OMA" id="SHVGCSH"/>
<dbReference type="Reactome" id="R-MMU-6805567">
    <property type="pathway name" value="Keratinization"/>
</dbReference>
<dbReference type="BioGRID-ORCS" id="50775">
    <property type="hits" value="8 hits in 55 CRISPR screens"/>
</dbReference>
<dbReference type="PRO" id="PR:Q62220"/>
<dbReference type="Proteomes" id="UP000000589">
    <property type="component" value="Chromosome 7"/>
</dbReference>
<dbReference type="RNAct" id="Q62220">
    <property type="molecule type" value="protein"/>
</dbReference>
<dbReference type="Bgee" id="ENSMUSG00000045236">
    <property type="expression patterns" value="Expressed in lip and 7 other cell types or tissues"/>
</dbReference>
<dbReference type="GO" id="GO:0005829">
    <property type="term" value="C:cytosol"/>
    <property type="evidence" value="ECO:0007669"/>
    <property type="project" value="UniProtKB-ARBA"/>
</dbReference>
<dbReference type="GO" id="GO:0045095">
    <property type="term" value="C:keratin filament"/>
    <property type="evidence" value="ECO:0007669"/>
    <property type="project" value="InterPro"/>
</dbReference>
<dbReference type="InterPro" id="IPR002494">
    <property type="entry name" value="KAP"/>
</dbReference>
<dbReference type="Pfam" id="PF13885">
    <property type="entry name" value="Keratin_B2_2"/>
    <property type="match status" value="2"/>
</dbReference>
<reference evidence="4 5" key="1">
    <citation type="journal article" date="1990" name="J. Biol. Chem.">
        <title>Serine-rich ultra high sulfur protein gene expression in murine hair and skin during the hair cycle.</title>
        <authorList>
            <person name="Wood L."/>
            <person name="Mills M."/>
            <person name="Hatzenbuhler N."/>
            <person name="Vogeli G."/>
        </authorList>
    </citation>
    <scope>NUCLEOTIDE SEQUENCE [GENOMIC DNA]</scope>
    <scope>TISSUE SPECIFICITY</scope>
    <source>
        <strain evidence="5">BALB/cJ</strain>
    </source>
</reference>
<reference key="2">
    <citation type="journal article" date="1991" name="J. Biol. Chem.">
        <authorList>
            <person name="Wood L."/>
            <person name="Mills M."/>
            <person name="Hatzenbuhler N."/>
            <person name="Vogeli G."/>
        </authorList>
    </citation>
    <scope>ERRATUM OF PUBMED:2250030</scope>
</reference>
<evidence type="ECO:0000250" key="1">
    <source>
        <dbReference type="UniProtKB" id="Q6L8H1"/>
    </source>
</evidence>
<evidence type="ECO:0000255" key="2"/>
<evidence type="ECO:0000269" key="3">
    <source>
    </source>
</evidence>
<evidence type="ECO:0000305" key="4"/>
<evidence type="ECO:0000312" key="5">
    <source>
        <dbReference type="EMBL" id="AAA40107.1"/>
    </source>
</evidence>
<evidence type="ECO:0000312" key="6">
    <source>
        <dbReference type="MGI" id="MGI:1354758"/>
    </source>
</evidence>
<accession>Q62220</accession>
<name>KRA54_MOUSE</name>
<proteinExistence type="evidence at transcript level"/>
<comment type="function">
    <text evidence="4">In the hair cortex, hair keratin intermediate filaments are embedded in an interfilamentous matrix, consisting of hair keratin-associated protein (KRTAP), which are essential for the formation of a rigid and resistant hair shaft through their extensive disulfide bond cross-linking with abundant cysteine residues of hair keratins. The matrix proteins include the high-sulfur and high-glycine-tyrosine keratins.</text>
</comment>
<comment type="subunit">
    <text evidence="4">Interacts with hair keratins.</text>
</comment>
<comment type="tissue specificity">
    <text evidence="3">Expressed during the active phases of the hair cycle in the medulla and the inner root sheath of the forming hair. Also expressed in the upper layers of the epidermis of skin.</text>
</comment>
<comment type="similarity">
    <text evidence="1">Belongs to the KRTAP type 5 family.</text>
</comment>